<dbReference type="EMBL" id="CP001407">
    <property type="protein sequence ID" value="ACO27519.1"/>
    <property type="molecule type" value="Genomic_DNA"/>
</dbReference>
<dbReference type="RefSeq" id="WP_000160207.1">
    <property type="nucleotide sequence ID" value="NZ_CP009318.1"/>
</dbReference>
<dbReference type="SMR" id="C1ET39"/>
<dbReference type="GeneID" id="93010943"/>
<dbReference type="KEGG" id="bcx:BCA_0139"/>
<dbReference type="PATRIC" id="fig|572264.18.peg.174"/>
<dbReference type="Proteomes" id="UP000002210">
    <property type="component" value="Chromosome"/>
</dbReference>
<dbReference type="GO" id="GO:0022625">
    <property type="term" value="C:cytosolic large ribosomal subunit"/>
    <property type="evidence" value="ECO:0007669"/>
    <property type="project" value="TreeGrafter"/>
</dbReference>
<dbReference type="GO" id="GO:0019843">
    <property type="term" value="F:rRNA binding"/>
    <property type="evidence" value="ECO:0007669"/>
    <property type="project" value="UniProtKB-UniRule"/>
</dbReference>
<dbReference type="GO" id="GO:0003735">
    <property type="term" value="F:structural constituent of ribosome"/>
    <property type="evidence" value="ECO:0007669"/>
    <property type="project" value="InterPro"/>
</dbReference>
<dbReference type="GO" id="GO:0006412">
    <property type="term" value="P:translation"/>
    <property type="evidence" value="ECO:0007669"/>
    <property type="project" value="UniProtKB-UniRule"/>
</dbReference>
<dbReference type="FunFam" id="2.40.30.10:FF:000004">
    <property type="entry name" value="50S ribosomal protein L3"/>
    <property type="match status" value="1"/>
</dbReference>
<dbReference type="FunFam" id="3.30.160.810:FF:000002">
    <property type="entry name" value="50S ribosomal protein L3"/>
    <property type="match status" value="1"/>
</dbReference>
<dbReference type="Gene3D" id="3.30.160.810">
    <property type="match status" value="1"/>
</dbReference>
<dbReference type="Gene3D" id="2.40.30.10">
    <property type="entry name" value="Translation factors"/>
    <property type="match status" value="1"/>
</dbReference>
<dbReference type="HAMAP" id="MF_01325_B">
    <property type="entry name" value="Ribosomal_uL3_B"/>
    <property type="match status" value="1"/>
</dbReference>
<dbReference type="InterPro" id="IPR000597">
    <property type="entry name" value="Ribosomal_uL3"/>
</dbReference>
<dbReference type="InterPro" id="IPR019927">
    <property type="entry name" value="Ribosomal_uL3_bac/org-type"/>
</dbReference>
<dbReference type="InterPro" id="IPR019926">
    <property type="entry name" value="Ribosomal_uL3_CS"/>
</dbReference>
<dbReference type="InterPro" id="IPR009000">
    <property type="entry name" value="Transl_B-barrel_sf"/>
</dbReference>
<dbReference type="NCBIfam" id="TIGR03625">
    <property type="entry name" value="L3_bact"/>
    <property type="match status" value="1"/>
</dbReference>
<dbReference type="PANTHER" id="PTHR11229">
    <property type="entry name" value="50S RIBOSOMAL PROTEIN L3"/>
    <property type="match status" value="1"/>
</dbReference>
<dbReference type="PANTHER" id="PTHR11229:SF16">
    <property type="entry name" value="LARGE RIBOSOMAL SUBUNIT PROTEIN UL3C"/>
    <property type="match status" value="1"/>
</dbReference>
<dbReference type="Pfam" id="PF00297">
    <property type="entry name" value="Ribosomal_L3"/>
    <property type="match status" value="1"/>
</dbReference>
<dbReference type="SUPFAM" id="SSF50447">
    <property type="entry name" value="Translation proteins"/>
    <property type="match status" value="1"/>
</dbReference>
<dbReference type="PROSITE" id="PS00474">
    <property type="entry name" value="RIBOSOMAL_L3"/>
    <property type="match status" value="1"/>
</dbReference>
<sequence length="210" mass="22692">MTKGILGRKIGMTQVFAENGELIPVTVIAANPNVVLQKKTTETDGYNAIQLGFEDKREKLTNKPEQGHTAKASTTPKRFIREIRDADVDGLEVGQEVKVDVFATGEIVDVTGISKGKGFQGVIKRHGQSRGPMSHGSRYHRRPGSMGPVAPNRVFKGKKLAGRMGGDQVTIQNLEIVQVDTERNLLLVKGNVPGAKKSLVVVQGAVKVSK</sequence>
<accession>C1ET39</accession>
<proteinExistence type="inferred from homology"/>
<gene>
    <name evidence="1" type="primary">rplC</name>
    <name type="ordered locus">BCA_0139</name>
</gene>
<organism>
    <name type="scientific">Bacillus cereus (strain 03BB102)</name>
    <dbReference type="NCBI Taxonomy" id="572264"/>
    <lineage>
        <taxon>Bacteria</taxon>
        <taxon>Bacillati</taxon>
        <taxon>Bacillota</taxon>
        <taxon>Bacilli</taxon>
        <taxon>Bacillales</taxon>
        <taxon>Bacillaceae</taxon>
        <taxon>Bacillus</taxon>
        <taxon>Bacillus cereus group</taxon>
    </lineage>
</organism>
<evidence type="ECO:0000255" key="1">
    <source>
        <dbReference type="HAMAP-Rule" id="MF_01325"/>
    </source>
</evidence>
<evidence type="ECO:0000256" key="2">
    <source>
        <dbReference type="SAM" id="MobiDB-lite"/>
    </source>
</evidence>
<evidence type="ECO:0000305" key="3"/>
<feature type="chain" id="PRO_1000165866" description="Large ribosomal subunit protein uL3">
    <location>
        <begin position="1"/>
        <end position="210"/>
    </location>
</feature>
<feature type="region of interest" description="Disordered" evidence="2">
    <location>
        <begin position="125"/>
        <end position="151"/>
    </location>
</feature>
<comment type="function">
    <text evidence="1">One of the primary rRNA binding proteins, it binds directly near the 3'-end of the 23S rRNA, where it nucleates assembly of the 50S subunit.</text>
</comment>
<comment type="subunit">
    <text evidence="1">Part of the 50S ribosomal subunit. Forms a cluster with proteins L14 and L19.</text>
</comment>
<comment type="similarity">
    <text evidence="1">Belongs to the universal ribosomal protein uL3 family.</text>
</comment>
<protein>
    <recommendedName>
        <fullName evidence="1">Large ribosomal subunit protein uL3</fullName>
    </recommendedName>
    <alternativeName>
        <fullName evidence="3">50S ribosomal protein L3</fullName>
    </alternativeName>
</protein>
<keyword id="KW-0687">Ribonucleoprotein</keyword>
<keyword id="KW-0689">Ribosomal protein</keyword>
<keyword id="KW-0694">RNA-binding</keyword>
<keyword id="KW-0699">rRNA-binding</keyword>
<name>RL3_BACC3</name>
<reference key="1">
    <citation type="submission" date="2009-02" db="EMBL/GenBank/DDBJ databases">
        <title>Genome sequence of Bacillus cereus 03BB102.</title>
        <authorList>
            <person name="Dodson R.J."/>
            <person name="Jackson P."/>
            <person name="Munk A.C."/>
            <person name="Brettin T."/>
            <person name="Bruce D."/>
            <person name="Detter C."/>
            <person name="Tapia R."/>
            <person name="Han C."/>
            <person name="Sutton G."/>
            <person name="Sims D."/>
        </authorList>
    </citation>
    <scope>NUCLEOTIDE SEQUENCE [LARGE SCALE GENOMIC DNA]</scope>
    <source>
        <strain>03BB102</strain>
    </source>
</reference>